<protein>
    <recommendedName>
        <fullName evidence="1">DNA-directed RNA polymerase subunit omega</fullName>
        <shortName evidence="1">RNAP omega subunit</shortName>
        <ecNumber evidence="1">2.7.7.6</ecNumber>
    </recommendedName>
    <alternativeName>
        <fullName evidence="1">RNA polymerase omega subunit</fullName>
    </alternativeName>
    <alternativeName>
        <fullName evidence="1">Transcriptase subunit omega</fullName>
    </alternativeName>
</protein>
<feature type="chain" id="PRO_1000005958" description="DNA-directed RNA polymerase subunit omega">
    <location>
        <begin position="1"/>
        <end position="108"/>
    </location>
</feature>
<feature type="region of interest" description="Disordered" evidence="2">
    <location>
        <begin position="1"/>
        <end position="32"/>
    </location>
</feature>
<keyword id="KW-0240">DNA-directed RNA polymerase</keyword>
<keyword id="KW-0548">Nucleotidyltransferase</keyword>
<keyword id="KW-0804">Transcription</keyword>
<keyword id="KW-0808">Transferase</keyword>
<evidence type="ECO:0000255" key="1">
    <source>
        <dbReference type="HAMAP-Rule" id="MF_00366"/>
    </source>
</evidence>
<evidence type="ECO:0000256" key="2">
    <source>
        <dbReference type="SAM" id="MobiDB-lite"/>
    </source>
</evidence>
<organism>
    <name type="scientific">Mycobacterium avium (strain 104)</name>
    <dbReference type="NCBI Taxonomy" id="243243"/>
    <lineage>
        <taxon>Bacteria</taxon>
        <taxon>Bacillati</taxon>
        <taxon>Actinomycetota</taxon>
        <taxon>Actinomycetes</taxon>
        <taxon>Mycobacteriales</taxon>
        <taxon>Mycobacteriaceae</taxon>
        <taxon>Mycobacterium</taxon>
        <taxon>Mycobacterium avium complex (MAC)</taxon>
    </lineage>
</organism>
<accession>A0QI28</accession>
<name>RPOZ_MYCA1</name>
<comment type="function">
    <text evidence="1">Promotes RNA polymerase assembly. Latches the N- and C-terminal regions of the beta' subunit thereby facilitating its interaction with the beta and alpha subunits.</text>
</comment>
<comment type="catalytic activity">
    <reaction evidence="1">
        <text>RNA(n) + a ribonucleoside 5'-triphosphate = RNA(n+1) + diphosphate</text>
        <dbReference type="Rhea" id="RHEA:21248"/>
        <dbReference type="Rhea" id="RHEA-COMP:14527"/>
        <dbReference type="Rhea" id="RHEA-COMP:17342"/>
        <dbReference type="ChEBI" id="CHEBI:33019"/>
        <dbReference type="ChEBI" id="CHEBI:61557"/>
        <dbReference type="ChEBI" id="CHEBI:140395"/>
        <dbReference type="EC" id="2.7.7.6"/>
    </reaction>
</comment>
<comment type="subunit">
    <text evidence="1">The RNAP catalytic core consists of 2 alpha, 1 beta, 1 beta' and 1 omega subunit. When a sigma factor is associated with the core the holoenzyme is formed, which can initiate transcription.</text>
</comment>
<comment type="similarity">
    <text evidence="1">Belongs to the RNA polymerase subunit omega family.</text>
</comment>
<dbReference type="EC" id="2.7.7.6" evidence="1"/>
<dbReference type="EMBL" id="CP000479">
    <property type="protein sequence ID" value="ABK66042.1"/>
    <property type="molecule type" value="Genomic_DNA"/>
</dbReference>
<dbReference type="RefSeq" id="WP_009977666.1">
    <property type="nucleotide sequence ID" value="NC_008595.1"/>
</dbReference>
<dbReference type="SMR" id="A0QI28"/>
<dbReference type="GeneID" id="75270781"/>
<dbReference type="KEGG" id="mav:MAV_3384"/>
<dbReference type="HOGENOM" id="CLU_125406_1_1_11"/>
<dbReference type="Proteomes" id="UP000001574">
    <property type="component" value="Chromosome"/>
</dbReference>
<dbReference type="GO" id="GO:0000428">
    <property type="term" value="C:DNA-directed RNA polymerase complex"/>
    <property type="evidence" value="ECO:0007669"/>
    <property type="project" value="UniProtKB-KW"/>
</dbReference>
<dbReference type="GO" id="GO:0003677">
    <property type="term" value="F:DNA binding"/>
    <property type="evidence" value="ECO:0007669"/>
    <property type="project" value="UniProtKB-UniRule"/>
</dbReference>
<dbReference type="GO" id="GO:0003899">
    <property type="term" value="F:DNA-directed RNA polymerase activity"/>
    <property type="evidence" value="ECO:0007669"/>
    <property type="project" value="UniProtKB-UniRule"/>
</dbReference>
<dbReference type="GO" id="GO:0006351">
    <property type="term" value="P:DNA-templated transcription"/>
    <property type="evidence" value="ECO:0007669"/>
    <property type="project" value="UniProtKB-UniRule"/>
</dbReference>
<dbReference type="FunFam" id="3.90.940.10:FF:000002">
    <property type="entry name" value="DNA-directed RNA polymerase subunit omega"/>
    <property type="match status" value="1"/>
</dbReference>
<dbReference type="Gene3D" id="3.90.940.10">
    <property type="match status" value="1"/>
</dbReference>
<dbReference type="HAMAP" id="MF_00366">
    <property type="entry name" value="RNApol_bact_RpoZ"/>
    <property type="match status" value="1"/>
</dbReference>
<dbReference type="InterPro" id="IPR003716">
    <property type="entry name" value="DNA-dir_RNA_pol_omega"/>
</dbReference>
<dbReference type="InterPro" id="IPR006110">
    <property type="entry name" value="Pol_omega/Rpo6/RPB6"/>
</dbReference>
<dbReference type="InterPro" id="IPR036161">
    <property type="entry name" value="RPB6/omega-like_sf"/>
</dbReference>
<dbReference type="NCBIfam" id="TIGR00690">
    <property type="entry name" value="rpoZ"/>
    <property type="match status" value="1"/>
</dbReference>
<dbReference type="PANTHER" id="PTHR34476">
    <property type="entry name" value="DNA-DIRECTED RNA POLYMERASE SUBUNIT OMEGA"/>
    <property type="match status" value="1"/>
</dbReference>
<dbReference type="PANTHER" id="PTHR34476:SF1">
    <property type="entry name" value="DNA-DIRECTED RNA POLYMERASE SUBUNIT OMEGA"/>
    <property type="match status" value="1"/>
</dbReference>
<dbReference type="Pfam" id="PF01192">
    <property type="entry name" value="RNA_pol_Rpb6"/>
    <property type="match status" value="1"/>
</dbReference>
<dbReference type="SMART" id="SM01409">
    <property type="entry name" value="RNA_pol_Rpb6"/>
    <property type="match status" value="1"/>
</dbReference>
<dbReference type="SUPFAM" id="SSF63562">
    <property type="entry name" value="RPB6/omega subunit-like"/>
    <property type="match status" value="1"/>
</dbReference>
<sequence>MTNSQSDAALAAVPDRFDPSAGGPGAYDTPLGITNPPIDELLDRVSSKYALVIYAAKRARQINDYYNQLGEGILEYVGPLVEPGLQEKPLSIALREIHGDLLEHTEGE</sequence>
<proteinExistence type="inferred from homology"/>
<reference key="1">
    <citation type="submission" date="2006-10" db="EMBL/GenBank/DDBJ databases">
        <authorList>
            <person name="Fleischmann R.D."/>
            <person name="Dodson R.J."/>
            <person name="Haft D.H."/>
            <person name="Merkel J.S."/>
            <person name="Nelson W.C."/>
            <person name="Fraser C.M."/>
        </authorList>
    </citation>
    <scope>NUCLEOTIDE SEQUENCE [LARGE SCALE GENOMIC DNA]</scope>
    <source>
        <strain>104</strain>
    </source>
</reference>
<gene>
    <name evidence="1" type="primary">rpoZ</name>
    <name type="ordered locus">MAV_3384</name>
</gene>